<evidence type="ECO:0000255" key="1">
    <source>
        <dbReference type="HAMAP-Rule" id="MF_01315"/>
    </source>
</evidence>
<evidence type="ECO:0000256" key="2">
    <source>
        <dbReference type="SAM" id="MobiDB-lite"/>
    </source>
</evidence>
<evidence type="ECO:0000305" key="3"/>
<sequence length="118" mass="13149">MARIAGVNIPDNKHAVISLTYIFGVGRHTAKSILAAVGIGPTTKIRELDDAQLDAIRAEVAKVPTEGDLRREISMNIKRLMDLGCYRGLRHRRSLPVRGQRTKTNARTRKGPRKPIKK</sequence>
<protein>
    <recommendedName>
        <fullName evidence="1">Small ribosomal subunit protein uS13</fullName>
    </recommendedName>
    <alternativeName>
        <fullName evidence="3">30S ribosomal protein S13</fullName>
    </alternativeName>
</protein>
<feature type="chain" id="PRO_0000230462" description="Small ribosomal subunit protein uS13">
    <location>
        <begin position="1"/>
        <end position="118"/>
    </location>
</feature>
<feature type="region of interest" description="Disordered" evidence="2">
    <location>
        <begin position="92"/>
        <end position="118"/>
    </location>
</feature>
<reference key="1">
    <citation type="journal article" date="2004" name="Nucleic Acids Res.">
        <title>Unique features revealed by the genome sequence of Acinetobacter sp. ADP1, a versatile and naturally transformation competent bacterium.</title>
        <authorList>
            <person name="Barbe V."/>
            <person name="Vallenet D."/>
            <person name="Fonknechten N."/>
            <person name="Kreimeyer A."/>
            <person name="Oztas S."/>
            <person name="Labarre L."/>
            <person name="Cruveiller S."/>
            <person name="Robert C."/>
            <person name="Duprat S."/>
            <person name="Wincker P."/>
            <person name="Ornston L.N."/>
            <person name="Weissenbach J."/>
            <person name="Marliere P."/>
            <person name="Cohen G.N."/>
            <person name="Medigue C."/>
        </authorList>
    </citation>
    <scope>NUCLEOTIDE SEQUENCE [LARGE SCALE GENOMIC DNA]</scope>
    <source>
        <strain>ATCC 33305 / BD413 / ADP1</strain>
    </source>
</reference>
<proteinExistence type="inferred from homology"/>
<organism>
    <name type="scientific">Acinetobacter baylyi (strain ATCC 33305 / BD413 / ADP1)</name>
    <dbReference type="NCBI Taxonomy" id="62977"/>
    <lineage>
        <taxon>Bacteria</taxon>
        <taxon>Pseudomonadati</taxon>
        <taxon>Pseudomonadota</taxon>
        <taxon>Gammaproteobacteria</taxon>
        <taxon>Moraxellales</taxon>
        <taxon>Moraxellaceae</taxon>
        <taxon>Acinetobacter</taxon>
    </lineage>
</organism>
<gene>
    <name evidence="1" type="primary">rpsM</name>
    <name type="ordered locus">ACIAD3197</name>
</gene>
<name>RS13_ACIAD</name>
<accession>Q6F7T4</accession>
<comment type="function">
    <text evidence="1">Located at the top of the head of the 30S subunit, it contacts several helices of the 16S rRNA. In the 70S ribosome it contacts the 23S rRNA (bridge B1a) and protein L5 of the 50S subunit (bridge B1b), connecting the 2 subunits; these bridges are implicated in subunit movement. Contacts the tRNAs in the A and P-sites.</text>
</comment>
<comment type="subunit">
    <text evidence="1">Part of the 30S ribosomal subunit. Forms a loose heterodimer with protein S19. Forms two bridges to the 50S subunit in the 70S ribosome.</text>
</comment>
<comment type="similarity">
    <text evidence="1">Belongs to the universal ribosomal protein uS13 family.</text>
</comment>
<keyword id="KW-0687">Ribonucleoprotein</keyword>
<keyword id="KW-0689">Ribosomal protein</keyword>
<keyword id="KW-0694">RNA-binding</keyword>
<keyword id="KW-0699">rRNA-binding</keyword>
<keyword id="KW-0820">tRNA-binding</keyword>
<dbReference type="EMBL" id="CR543861">
    <property type="protein sequence ID" value="CAG69881.1"/>
    <property type="molecule type" value="Genomic_DNA"/>
</dbReference>
<dbReference type="RefSeq" id="WP_004924153.1">
    <property type="nucleotide sequence ID" value="NC_005966.1"/>
</dbReference>
<dbReference type="SMR" id="Q6F7T4"/>
<dbReference type="STRING" id="202950.GCA_001485005_02958"/>
<dbReference type="GeneID" id="45235412"/>
<dbReference type="KEGG" id="aci:ACIAD3197"/>
<dbReference type="eggNOG" id="COG0099">
    <property type="taxonomic scope" value="Bacteria"/>
</dbReference>
<dbReference type="HOGENOM" id="CLU_103849_1_2_6"/>
<dbReference type="OrthoDB" id="9803610at2"/>
<dbReference type="BioCyc" id="ASP62977:ACIAD_RS14485-MONOMER"/>
<dbReference type="Proteomes" id="UP000000430">
    <property type="component" value="Chromosome"/>
</dbReference>
<dbReference type="GO" id="GO:0005829">
    <property type="term" value="C:cytosol"/>
    <property type="evidence" value="ECO:0007669"/>
    <property type="project" value="TreeGrafter"/>
</dbReference>
<dbReference type="GO" id="GO:0015935">
    <property type="term" value="C:small ribosomal subunit"/>
    <property type="evidence" value="ECO:0007669"/>
    <property type="project" value="TreeGrafter"/>
</dbReference>
<dbReference type="GO" id="GO:0019843">
    <property type="term" value="F:rRNA binding"/>
    <property type="evidence" value="ECO:0007669"/>
    <property type="project" value="UniProtKB-UniRule"/>
</dbReference>
<dbReference type="GO" id="GO:0003735">
    <property type="term" value="F:structural constituent of ribosome"/>
    <property type="evidence" value="ECO:0007669"/>
    <property type="project" value="InterPro"/>
</dbReference>
<dbReference type="GO" id="GO:0000049">
    <property type="term" value="F:tRNA binding"/>
    <property type="evidence" value="ECO:0007669"/>
    <property type="project" value="UniProtKB-UniRule"/>
</dbReference>
<dbReference type="GO" id="GO:0006412">
    <property type="term" value="P:translation"/>
    <property type="evidence" value="ECO:0007669"/>
    <property type="project" value="UniProtKB-UniRule"/>
</dbReference>
<dbReference type="FunFam" id="1.10.8.50:FF:000001">
    <property type="entry name" value="30S ribosomal protein S13"/>
    <property type="match status" value="1"/>
</dbReference>
<dbReference type="FunFam" id="4.10.910.10:FF:000001">
    <property type="entry name" value="30S ribosomal protein S13"/>
    <property type="match status" value="1"/>
</dbReference>
<dbReference type="Gene3D" id="1.10.8.50">
    <property type="match status" value="1"/>
</dbReference>
<dbReference type="Gene3D" id="4.10.910.10">
    <property type="entry name" value="30s ribosomal protein s13, domain 2"/>
    <property type="match status" value="1"/>
</dbReference>
<dbReference type="HAMAP" id="MF_01315">
    <property type="entry name" value="Ribosomal_uS13"/>
    <property type="match status" value="1"/>
</dbReference>
<dbReference type="InterPro" id="IPR027437">
    <property type="entry name" value="Rbsml_uS13_C"/>
</dbReference>
<dbReference type="InterPro" id="IPR001892">
    <property type="entry name" value="Ribosomal_uS13"/>
</dbReference>
<dbReference type="InterPro" id="IPR010979">
    <property type="entry name" value="Ribosomal_uS13-like_H2TH"/>
</dbReference>
<dbReference type="InterPro" id="IPR019980">
    <property type="entry name" value="Ribosomal_uS13_bac-type"/>
</dbReference>
<dbReference type="InterPro" id="IPR018269">
    <property type="entry name" value="Ribosomal_uS13_CS"/>
</dbReference>
<dbReference type="NCBIfam" id="TIGR03631">
    <property type="entry name" value="uS13_bact"/>
    <property type="match status" value="1"/>
</dbReference>
<dbReference type="PANTHER" id="PTHR10871">
    <property type="entry name" value="30S RIBOSOMAL PROTEIN S13/40S RIBOSOMAL PROTEIN S18"/>
    <property type="match status" value="1"/>
</dbReference>
<dbReference type="PANTHER" id="PTHR10871:SF1">
    <property type="entry name" value="SMALL RIBOSOMAL SUBUNIT PROTEIN US13M"/>
    <property type="match status" value="1"/>
</dbReference>
<dbReference type="Pfam" id="PF00416">
    <property type="entry name" value="Ribosomal_S13"/>
    <property type="match status" value="2"/>
</dbReference>
<dbReference type="PIRSF" id="PIRSF002134">
    <property type="entry name" value="Ribosomal_S13"/>
    <property type="match status" value="1"/>
</dbReference>
<dbReference type="SUPFAM" id="SSF46946">
    <property type="entry name" value="S13-like H2TH domain"/>
    <property type="match status" value="1"/>
</dbReference>
<dbReference type="PROSITE" id="PS00646">
    <property type="entry name" value="RIBOSOMAL_S13_1"/>
    <property type="match status" value="1"/>
</dbReference>
<dbReference type="PROSITE" id="PS50159">
    <property type="entry name" value="RIBOSOMAL_S13_2"/>
    <property type="match status" value="1"/>
</dbReference>